<gene>
    <name type="primary">trmJ</name>
    <name type="ordered locus">STY2791</name>
    <name type="ordered locus">t0311</name>
</gene>
<evidence type="ECO:0000250" key="1">
    <source>
        <dbReference type="UniProtKB" id="P0AE01"/>
    </source>
</evidence>
<evidence type="ECO:0000305" key="2"/>
<keyword id="KW-0963">Cytoplasm</keyword>
<keyword id="KW-0489">Methyltransferase</keyword>
<keyword id="KW-0949">S-adenosyl-L-methionine</keyword>
<keyword id="KW-0808">Transferase</keyword>
<keyword id="KW-0819">tRNA processing</keyword>
<feature type="chain" id="PRO_0000159827" description="tRNA (cytidine/uridine-2'-O-)-methyltransferase TrmJ">
    <location>
        <begin position="1"/>
        <end position="243"/>
    </location>
</feature>
<feature type="binding site" evidence="1">
    <location>
        <begin position="79"/>
        <end position="81"/>
    </location>
    <ligand>
        <name>S-adenosyl-L-methionine</name>
        <dbReference type="ChEBI" id="CHEBI:59789"/>
    </ligand>
</feature>
<feature type="binding site" evidence="1">
    <location>
        <position position="114"/>
    </location>
    <ligand>
        <name>S-adenosyl-L-methionine</name>
        <dbReference type="ChEBI" id="CHEBI:59789"/>
    </ligand>
</feature>
<feature type="binding site" evidence="1">
    <location>
        <position position="134"/>
    </location>
    <ligand>
        <name>S-adenosyl-L-methionine</name>
        <dbReference type="ChEBI" id="CHEBI:59789"/>
    </ligand>
</feature>
<feature type="binding site" evidence="1">
    <location>
        <begin position="141"/>
        <end position="143"/>
    </location>
    <ligand>
        <name>S-adenosyl-L-methionine</name>
        <dbReference type="ChEBI" id="CHEBI:59789"/>
    </ligand>
</feature>
<proteinExistence type="inferred from homology"/>
<comment type="function">
    <text evidence="1">Catalyzes the formation of 2'O-methylated cytidine (Cm32) or 2'O-methylated uridine (Um32) at position 32 in tRNA.</text>
</comment>
<comment type="catalytic activity">
    <reaction evidence="1">
        <text>cytidine(32) in tRNA + S-adenosyl-L-methionine = 2'-O-methylcytidine(32) in tRNA + S-adenosyl-L-homocysteine + H(+)</text>
        <dbReference type="Rhea" id="RHEA:42932"/>
        <dbReference type="Rhea" id="RHEA-COMP:10288"/>
        <dbReference type="Rhea" id="RHEA-COMP:10289"/>
        <dbReference type="ChEBI" id="CHEBI:15378"/>
        <dbReference type="ChEBI" id="CHEBI:57856"/>
        <dbReference type="ChEBI" id="CHEBI:59789"/>
        <dbReference type="ChEBI" id="CHEBI:74495"/>
        <dbReference type="ChEBI" id="CHEBI:82748"/>
        <dbReference type="EC" id="2.1.1.200"/>
    </reaction>
</comment>
<comment type="catalytic activity">
    <reaction evidence="1">
        <text>uridine(32) in tRNA + S-adenosyl-L-methionine = 2'-O-methyluridine(32) in tRNA + S-adenosyl-L-homocysteine + H(+)</text>
        <dbReference type="Rhea" id="RHEA:42936"/>
        <dbReference type="Rhea" id="RHEA-COMP:10107"/>
        <dbReference type="Rhea" id="RHEA-COMP:10290"/>
        <dbReference type="ChEBI" id="CHEBI:15378"/>
        <dbReference type="ChEBI" id="CHEBI:57856"/>
        <dbReference type="ChEBI" id="CHEBI:59789"/>
        <dbReference type="ChEBI" id="CHEBI:65315"/>
        <dbReference type="ChEBI" id="CHEBI:74478"/>
        <dbReference type="EC" id="2.1.1.200"/>
    </reaction>
</comment>
<comment type="subunit">
    <text evidence="1">Homodimer.</text>
</comment>
<comment type="subcellular location">
    <subcellularLocation>
        <location evidence="1">Cytoplasm</location>
    </subcellularLocation>
</comment>
<comment type="similarity">
    <text evidence="2">Belongs to the class IV-like SAM-binding methyltransferase superfamily. RNA methyltransferase TrmH family.</text>
</comment>
<organism>
    <name type="scientific">Salmonella typhi</name>
    <dbReference type="NCBI Taxonomy" id="90370"/>
    <lineage>
        <taxon>Bacteria</taxon>
        <taxon>Pseudomonadati</taxon>
        <taxon>Pseudomonadota</taxon>
        <taxon>Gammaproteobacteria</taxon>
        <taxon>Enterobacterales</taxon>
        <taxon>Enterobacteriaceae</taxon>
        <taxon>Salmonella</taxon>
    </lineage>
</organism>
<name>TRMJ_SALTI</name>
<accession>P66975</accession>
<accession>Q8XEM9</accession>
<protein>
    <recommendedName>
        <fullName evidence="1">tRNA (cytidine/uridine-2'-O-)-methyltransferase TrmJ</fullName>
        <ecNumber evidence="1">2.1.1.200</ecNumber>
    </recommendedName>
    <alternativeName>
        <fullName evidence="1">tRNA (cytidine(32)/uridine(32)-2'-O)-methyltransferase</fullName>
    </alternativeName>
    <alternativeName>
        <fullName evidence="1">tRNA Cm32/Um32 methyltransferase</fullName>
    </alternativeName>
</protein>
<dbReference type="EC" id="2.1.1.200" evidence="1"/>
<dbReference type="EMBL" id="AL513382">
    <property type="protein sequence ID" value="CAD02748.1"/>
    <property type="molecule type" value="Genomic_DNA"/>
</dbReference>
<dbReference type="EMBL" id="AE014613">
    <property type="protein sequence ID" value="AAO68035.1"/>
    <property type="molecule type" value="Genomic_DNA"/>
</dbReference>
<dbReference type="RefSeq" id="NP_457076.1">
    <property type="nucleotide sequence ID" value="NC_003198.1"/>
</dbReference>
<dbReference type="RefSeq" id="WP_000940032.1">
    <property type="nucleotide sequence ID" value="NZ_WSUR01000007.1"/>
</dbReference>
<dbReference type="SMR" id="P66975"/>
<dbReference type="STRING" id="220341.gene:17586682"/>
<dbReference type="KEGG" id="stt:t0311"/>
<dbReference type="KEGG" id="sty:STY2791"/>
<dbReference type="PATRIC" id="fig|220341.7.peg.2837"/>
<dbReference type="eggNOG" id="COG0565">
    <property type="taxonomic scope" value="Bacteria"/>
</dbReference>
<dbReference type="HOGENOM" id="CLU_056931_0_1_6"/>
<dbReference type="OMA" id="ARVMKNM"/>
<dbReference type="OrthoDB" id="9806346at2"/>
<dbReference type="Proteomes" id="UP000000541">
    <property type="component" value="Chromosome"/>
</dbReference>
<dbReference type="Proteomes" id="UP000002670">
    <property type="component" value="Chromosome"/>
</dbReference>
<dbReference type="GO" id="GO:0005829">
    <property type="term" value="C:cytosol"/>
    <property type="evidence" value="ECO:0007669"/>
    <property type="project" value="TreeGrafter"/>
</dbReference>
<dbReference type="GO" id="GO:0003723">
    <property type="term" value="F:RNA binding"/>
    <property type="evidence" value="ECO:0007669"/>
    <property type="project" value="InterPro"/>
</dbReference>
<dbReference type="GO" id="GO:0160206">
    <property type="term" value="F:tRNA (cytidine(32)/uridine(32)-2'-O)-methyltransferase activity"/>
    <property type="evidence" value="ECO:0007669"/>
    <property type="project" value="UniProtKB-EC"/>
</dbReference>
<dbReference type="GO" id="GO:0002128">
    <property type="term" value="P:tRNA nucleoside ribose methylation"/>
    <property type="evidence" value="ECO:0007669"/>
    <property type="project" value="TreeGrafter"/>
</dbReference>
<dbReference type="CDD" id="cd18093">
    <property type="entry name" value="SpoU-like_TrmJ"/>
    <property type="match status" value="1"/>
</dbReference>
<dbReference type="FunFam" id="1.10.8.590:FF:000001">
    <property type="entry name" value="tRNA:Cm32/Um32 methyltransferase"/>
    <property type="match status" value="1"/>
</dbReference>
<dbReference type="FunFam" id="3.40.1280.10:FF:000006">
    <property type="entry name" value="Uncharacterized tRNA/rRNA methyltransferase HI_0380"/>
    <property type="match status" value="1"/>
</dbReference>
<dbReference type="Gene3D" id="1.10.8.590">
    <property type="match status" value="1"/>
</dbReference>
<dbReference type="Gene3D" id="3.40.1280.10">
    <property type="match status" value="1"/>
</dbReference>
<dbReference type="InterPro" id="IPR029028">
    <property type="entry name" value="Alpha/beta_knot_MTases"/>
</dbReference>
<dbReference type="InterPro" id="IPR004384">
    <property type="entry name" value="RNA_MeTrfase_TrmJ/LasT"/>
</dbReference>
<dbReference type="InterPro" id="IPR001537">
    <property type="entry name" value="SpoU_MeTrfase"/>
</dbReference>
<dbReference type="InterPro" id="IPR029026">
    <property type="entry name" value="tRNA_m1G_MTases_N"/>
</dbReference>
<dbReference type="NCBIfam" id="NF011694">
    <property type="entry name" value="PRK15114.1"/>
    <property type="match status" value="1"/>
</dbReference>
<dbReference type="NCBIfam" id="TIGR00050">
    <property type="entry name" value="rRNA_methyl_1"/>
    <property type="match status" value="1"/>
</dbReference>
<dbReference type="PANTHER" id="PTHR42786:SF2">
    <property type="entry name" value="TRNA (CYTIDINE_URIDINE-2'-O-)-METHYLTRANSFERASE TRMJ"/>
    <property type="match status" value="1"/>
</dbReference>
<dbReference type="PANTHER" id="PTHR42786">
    <property type="entry name" value="TRNA/RRNA METHYLTRANSFERASE"/>
    <property type="match status" value="1"/>
</dbReference>
<dbReference type="Pfam" id="PF00588">
    <property type="entry name" value="SpoU_methylase"/>
    <property type="match status" value="1"/>
</dbReference>
<dbReference type="PIRSF" id="PIRSF004808">
    <property type="entry name" value="LasT"/>
    <property type="match status" value="1"/>
</dbReference>
<dbReference type="SUPFAM" id="SSF75217">
    <property type="entry name" value="alpha/beta knot"/>
    <property type="match status" value="1"/>
</dbReference>
<sequence>MLQNIRIVLVETSHTGNMGSVARAMKTMGLTNLWLVNPLVKPDSQAIALAAGASDVIGNAQIVDTLDEALAGCSLVVGTSARSRTLPWPMLDPRECGLKSVAEAANTPVALVFGRERVGLTNDELQKCHYHVAIAANPEYSSLNLAMAVQVIAYEVRMAWLATQENGDAADHEETPYPLVDDLERFYGHLEQTLLSTGFIRENHPGQVMNKLRRLFTRARPESQELNILRGILASIEQQNKGK</sequence>
<reference key="1">
    <citation type="journal article" date="2001" name="Nature">
        <title>Complete genome sequence of a multiple drug resistant Salmonella enterica serovar Typhi CT18.</title>
        <authorList>
            <person name="Parkhill J."/>
            <person name="Dougan G."/>
            <person name="James K.D."/>
            <person name="Thomson N.R."/>
            <person name="Pickard D."/>
            <person name="Wain J."/>
            <person name="Churcher C.M."/>
            <person name="Mungall K.L."/>
            <person name="Bentley S.D."/>
            <person name="Holden M.T.G."/>
            <person name="Sebaihia M."/>
            <person name="Baker S."/>
            <person name="Basham D."/>
            <person name="Brooks K."/>
            <person name="Chillingworth T."/>
            <person name="Connerton P."/>
            <person name="Cronin A."/>
            <person name="Davis P."/>
            <person name="Davies R.M."/>
            <person name="Dowd L."/>
            <person name="White N."/>
            <person name="Farrar J."/>
            <person name="Feltwell T."/>
            <person name="Hamlin N."/>
            <person name="Haque A."/>
            <person name="Hien T.T."/>
            <person name="Holroyd S."/>
            <person name="Jagels K."/>
            <person name="Krogh A."/>
            <person name="Larsen T.S."/>
            <person name="Leather S."/>
            <person name="Moule S."/>
            <person name="O'Gaora P."/>
            <person name="Parry C."/>
            <person name="Quail M.A."/>
            <person name="Rutherford K.M."/>
            <person name="Simmonds M."/>
            <person name="Skelton J."/>
            <person name="Stevens K."/>
            <person name="Whitehead S."/>
            <person name="Barrell B.G."/>
        </authorList>
    </citation>
    <scope>NUCLEOTIDE SEQUENCE [LARGE SCALE GENOMIC DNA]</scope>
    <source>
        <strain>CT18</strain>
    </source>
</reference>
<reference key="2">
    <citation type="journal article" date="2003" name="J. Bacteriol.">
        <title>Comparative genomics of Salmonella enterica serovar Typhi strains Ty2 and CT18.</title>
        <authorList>
            <person name="Deng W."/>
            <person name="Liou S.-R."/>
            <person name="Plunkett G. III"/>
            <person name="Mayhew G.F."/>
            <person name="Rose D.J."/>
            <person name="Burland V."/>
            <person name="Kodoyianni V."/>
            <person name="Schwartz D.C."/>
            <person name="Blattner F.R."/>
        </authorList>
    </citation>
    <scope>NUCLEOTIDE SEQUENCE [LARGE SCALE GENOMIC DNA]</scope>
    <source>
        <strain>ATCC 700931 / Ty2</strain>
    </source>
</reference>